<reference key="1">
    <citation type="journal article" date="2003" name="Genome Res.">
        <title>Comparative complete genome sequence analysis of the amino acid replacements responsible for the thermostability of Corynebacterium efficiens.</title>
        <authorList>
            <person name="Nishio Y."/>
            <person name="Nakamura Y."/>
            <person name="Kawarabayasi Y."/>
            <person name="Usuda Y."/>
            <person name="Kimura E."/>
            <person name="Sugimoto S."/>
            <person name="Matsui K."/>
            <person name="Yamagishi A."/>
            <person name="Kikuchi H."/>
            <person name="Ikeo K."/>
            <person name="Gojobori T."/>
        </authorList>
    </citation>
    <scope>NUCLEOTIDE SEQUENCE [LARGE SCALE GENOMIC DNA]</scope>
    <source>
        <strain>DSM 44549 / YS-314 / AJ 12310 / JCM 11189 / NBRC 100395</strain>
    </source>
</reference>
<protein>
    <recommendedName>
        <fullName>Cytochrome c oxidase subunit 3</fullName>
        <ecNumber>7.1.1.9</ecNumber>
    </recommendedName>
    <alternativeName>
        <fullName>Cytochrome aa3 subunit 3</fullName>
    </alternativeName>
    <alternativeName>
        <fullName>Cytochrome c oxidase polypeptide III</fullName>
    </alternativeName>
</protein>
<feature type="chain" id="PRO_0000183879" description="Cytochrome c oxidase subunit 3">
    <location>
        <begin position="1"/>
        <end position="205"/>
    </location>
</feature>
<feature type="transmembrane region" description="Helical" evidence="2">
    <location>
        <begin position="29"/>
        <end position="49"/>
    </location>
</feature>
<feature type="transmembrane region" description="Helical" evidence="2">
    <location>
        <begin position="73"/>
        <end position="93"/>
    </location>
</feature>
<feature type="transmembrane region" description="Helical" evidence="2">
    <location>
        <begin position="104"/>
        <end position="124"/>
    </location>
</feature>
<feature type="transmembrane region" description="Helical" evidence="2">
    <location>
        <begin position="144"/>
        <end position="164"/>
    </location>
</feature>
<feature type="transmembrane region" description="Helical" evidence="2">
    <location>
        <begin position="184"/>
        <end position="204"/>
    </location>
</feature>
<organism>
    <name type="scientific">Corynebacterium efficiens (strain DSM 44549 / YS-314 / AJ 12310 / JCM 11189 / NBRC 100395)</name>
    <dbReference type="NCBI Taxonomy" id="196164"/>
    <lineage>
        <taxon>Bacteria</taxon>
        <taxon>Bacillati</taxon>
        <taxon>Actinomycetota</taxon>
        <taxon>Actinomycetes</taxon>
        <taxon>Mycobacteriales</taxon>
        <taxon>Corynebacteriaceae</taxon>
        <taxon>Corynebacterium</taxon>
    </lineage>
</organism>
<evidence type="ECO:0000250" key="1"/>
<evidence type="ECO:0000255" key="2"/>
<evidence type="ECO:0000305" key="3"/>
<proteinExistence type="inferred from homology"/>
<keyword id="KW-1003">Cell membrane</keyword>
<keyword id="KW-0472">Membrane</keyword>
<keyword id="KW-1185">Reference proteome</keyword>
<keyword id="KW-1278">Translocase</keyword>
<keyword id="KW-0812">Transmembrane</keyword>
<keyword id="KW-1133">Transmembrane helix</keyword>
<comment type="catalytic activity">
    <reaction>
        <text>4 Fe(II)-[cytochrome c] + O2 + 8 H(+)(in) = 4 Fe(III)-[cytochrome c] + 2 H2O + 4 H(+)(out)</text>
        <dbReference type="Rhea" id="RHEA:11436"/>
        <dbReference type="Rhea" id="RHEA-COMP:10350"/>
        <dbReference type="Rhea" id="RHEA-COMP:14399"/>
        <dbReference type="ChEBI" id="CHEBI:15377"/>
        <dbReference type="ChEBI" id="CHEBI:15378"/>
        <dbReference type="ChEBI" id="CHEBI:15379"/>
        <dbReference type="ChEBI" id="CHEBI:29033"/>
        <dbReference type="ChEBI" id="CHEBI:29034"/>
        <dbReference type="EC" id="7.1.1.9"/>
    </reaction>
</comment>
<comment type="subunit">
    <text evidence="1">Associates with subunits I, II and IV to form cytochrome c oxidase.</text>
</comment>
<comment type="subcellular location">
    <subcellularLocation>
        <location evidence="1">Cell membrane</location>
        <topology evidence="1">Multi-pass membrane protein</topology>
    </subcellularLocation>
</comment>
<comment type="similarity">
    <text evidence="3">Belongs to the cytochrome c oxidase subunit 3 family.</text>
</comment>
<comment type="sequence caution" evidence="3">
    <conflict type="erroneous initiation">
        <sequence resource="EMBL-CDS" id="BAC18895"/>
    </conflict>
</comment>
<gene>
    <name type="primary">ctaE</name>
    <name type="ordered locus">CE2085</name>
</gene>
<name>COX3_COREF</name>
<accession>Q8FNQ9</accession>
<sequence length="205" mass="22419">MTSAVGNTGMAAPQRVAALNRPNMVSVGTIVFLSQELMFFAGLFAMYFVSRANGLANGSWAEQTDYLNVPYALAITVILVSSSVTCQFGVFAAERGDVYGLRKWFLITIILGSIFVIGQAYEYFTLVGHGLSIQSSVYGSAFYITTGFHAAHVIAGVIAFVVVLMRIQKAKFTPAQATAAMVVSYYWHFVDVVWIGLFITIYFIQ</sequence>
<dbReference type="EC" id="7.1.1.9"/>
<dbReference type="EMBL" id="BA000035">
    <property type="protein sequence ID" value="BAC18895.1"/>
    <property type="status" value="ALT_INIT"/>
    <property type="molecule type" value="Genomic_DNA"/>
</dbReference>
<dbReference type="RefSeq" id="WP_143758457.1">
    <property type="nucleotide sequence ID" value="NC_004369.1"/>
</dbReference>
<dbReference type="SMR" id="Q8FNQ9"/>
<dbReference type="STRING" id="196164.gene:10742513"/>
<dbReference type="KEGG" id="cef:CE2085"/>
<dbReference type="eggNOG" id="COG1845">
    <property type="taxonomic scope" value="Bacteria"/>
</dbReference>
<dbReference type="HOGENOM" id="CLU_044071_1_1_11"/>
<dbReference type="OrthoDB" id="9810850at2"/>
<dbReference type="Proteomes" id="UP000001409">
    <property type="component" value="Chromosome"/>
</dbReference>
<dbReference type="GO" id="GO:0005886">
    <property type="term" value="C:plasma membrane"/>
    <property type="evidence" value="ECO:0007669"/>
    <property type="project" value="UniProtKB-SubCell"/>
</dbReference>
<dbReference type="GO" id="GO:0004129">
    <property type="term" value="F:cytochrome-c oxidase activity"/>
    <property type="evidence" value="ECO:0007669"/>
    <property type="project" value="UniProtKB-EC"/>
</dbReference>
<dbReference type="GO" id="GO:0019646">
    <property type="term" value="P:aerobic electron transport chain"/>
    <property type="evidence" value="ECO:0007669"/>
    <property type="project" value="InterPro"/>
</dbReference>
<dbReference type="CDD" id="cd00386">
    <property type="entry name" value="Heme_Cu_Oxidase_III_like"/>
    <property type="match status" value="1"/>
</dbReference>
<dbReference type="FunFam" id="1.20.120.80:FF:000001">
    <property type="entry name" value="Cytochrome (Ubi)quinol oxidase subunit III"/>
    <property type="match status" value="1"/>
</dbReference>
<dbReference type="Gene3D" id="1.20.120.80">
    <property type="entry name" value="Cytochrome c oxidase, subunit III, four-helix bundle"/>
    <property type="match status" value="1"/>
</dbReference>
<dbReference type="InterPro" id="IPR024791">
    <property type="entry name" value="Cyt_c/ubiquinol_Oxase_su3"/>
</dbReference>
<dbReference type="InterPro" id="IPR000298">
    <property type="entry name" value="Cyt_c_oxidase-like_su3"/>
</dbReference>
<dbReference type="InterPro" id="IPR035973">
    <property type="entry name" value="Cyt_c_oxidase_su3-like_sf"/>
</dbReference>
<dbReference type="InterPro" id="IPR013833">
    <property type="entry name" value="Cyt_c_oxidase_su3_a-hlx"/>
</dbReference>
<dbReference type="PANTHER" id="PTHR11403:SF2">
    <property type="entry name" value="CYTOCHROME BO(3) UBIQUINOL OXIDASE SUBUNIT 3"/>
    <property type="match status" value="1"/>
</dbReference>
<dbReference type="PANTHER" id="PTHR11403">
    <property type="entry name" value="CYTOCHROME C OXIDASE SUBUNIT III"/>
    <property type="match status" value="1"/>
</dbReference>
<dbReference type="Pfam" id="PF00510">
    <property type="entry name" value="COX3"/>
    <property type="match status" value="1"/>
</dbReference>
<dbReference type="SUPFAM" id="SSF81452">
    <property type="entry name" value="Cytochrome c oxidase subunit III-like"/>
    <property type="match status" value="1"/>
</dbReference>
<dbReference type="PROSITE" id="PS50253">
    <property type="entry name" value="COX3"/>
    <property type="match status" value="1"/>
</dbReference>